<gene>
    <name evidence="1" type="primary">yfbV</name>
    <name type="ordered locus">ECIAI1_2369</name>
</gene>
<dbReference type="EMBL" id="CU928160">
    <property type="protein sequence ID" value="CAQ99211.1"/>
    <property type="molecule type" value="Genomic_DNA"/>
</dbReference>
<dbReference type="RefSeq" id="WP_000106627.1">
    <property type="nucleotide sequence ID" value="NC_011741.1"/>
</dbReference>
<dbReference type="GeneID" id="93774879"/>
<dbReference type="KEGG" id="ecr:ECIAI1_2369"/>
<dbReference type="HOGENOM" id="CLU_128746_0_0_6"/>
<dbReference type="GO" id="GO:0005886">
    <property type="term" value="C:plasma membrane"/>
    <property type="evidence" value="ECO:0007669"/>
    <property type="project" value="UniProtKB-SubCell"/>
</dbReference>
<dbReference type="HAMAP" id="MF_01101">
    <property type="entry name" value="UPF0208"/>
    <property type="match status" value="1"/>
</dbReference>
<dbReference type="InterPro" id="IPR007334">
    <property type="entry name" value="UPF0208"/>
</dbReference>
<dbReference type="NCBIfam" id="NF002493">
    <property type="entry name" value="PRK01816.1"/>
    <property type="match status" value="1"/>
</dbReference>
<dbReference type="Pfam" id="PF04217">
    <property type="entry name" value="DUF412"/>
    <property type="match status" value="1"/>
</dbReference>
<sequence length="151" mass="17213">MSTPDNRSVNFFSLFRRGQHYSKTWPLEKRLAPVFVENRVIKMTRYAIRFMPPIAVFTLCWQIALGGQLGPAVATALFALSLPMQGLWWLGKRSVTPLPPAILNWFYEVRGKLQESGQVLAPVEGKPDYQALADTLKRAFKQLDKTFLDDL</sequence>
<proteinExistence type="inferred from homology"/>
<keyword id="KW-0997">Cell inner membrane</keyword>
<keyword id="KW-1003">Cell membrane</keyword>
<keyword id="KW-0472">Membrane</keyword>
<keyword id="KW-0812">Transmembrane</keyword>
<keyword id="KW-1133">Transmembrane helix</keyword>
<comment type="subcellular location">
    <subcellularLocation>
        <location evidence="1">Cell inner membrane</location>
        <topology evidence="1">Multi-pass membrane protein</topology>
    </subcellularLocation>
</comment>
<comment type="similarity">
    <text evidence="1">Belongs to the UPF0208 family.</text>
</comment>
<reference key="1">
    <citation type="journal article" date="2009" name="PLoS Genet.">
        <title>Organised genome dynamics in the Escherichia coli species results in highly diverse adaptive paths.</title>
        <authorList>
            <person name="Touchon M."/>
            <person name="Hoede C."/>
            <person name="Tenaillon O."/>
            <person name="Barbe V."/>
            <person name="Baeriswyl S."/>
            <person name="Bidet P."/>
            <person name="Bingen E."/>
            <person name="Bonacorsi S."/>
            <person name="Bouchier C."/>
            <person name="Bouvet O."/>
            <person name="Calteau A."/>
            <person name="Chiapello H."/>
            <person name="Clermont O."/>
            <person name="Cruveiller S."/>
            <person name="Danchin A."/>
            <person name="Diard M."/>
            <person name="Dossat C."/>
            <person name="Karoui M.E."/>
            <person name="Frapy E."/>
            <person name="Garry L."/>
            <person name="Ghigo J.M."/>
            <person name="Gilles A.M."/>
            <person name="Johnson J."/>
            <person name="Le Bouguenec C."/>
            <person name="Lescat M."/>
            <person name="Mangenot S."/>
            <person name="Martinez-Jehanne V."/>
            <person name="Matic I."/>
            <person name="Nassif X."/>
            <person name="Oztas S."/>
            <person name="Petit M.A."/>
            <person name="Pichon C."/>
            <person name="Rouy Z."/>
            <person name="Ruf C.S."/>
            <person name="Schneider D."/>
            <person name="Tourret J."/>
            <person name="Vacherie B."/>
            <person name="Vallenet D."/>
            <person name="Medigue C."/>
            <person name="Rocha E.P.C."/>
            <person name="Denamur E."/>
        </authorList>
    </citation>
    <scope>NUCLEOTIDE SEQUENCE [LARGE SCALE GENOMIC DNA]</scope>
    <source>
        <strain>IAI1</strain>
    </source>
</reference>
<evidence type="ECO:0000255" key="1">
    <source>
        <dbReference type="HAMAP-Rule" id="MF_01101"/>
    </source>
</evidence>
<feature type="chain" id="PRO_1000136987" description="UPF0208 membrane protein YfbV">
    <location>
        <begin position="1"/>
        <end position="151"/>
    </location>
</feature>
<feature type="transmembrane region" description="Helical" evidence="1">
    <location>
        <begin position="46"/>
        <end position="65"/>
    </location>
</feature>
<feature type="transmembrane region" description="Helical" evidence="1">
    <location>
        <begin position="69"/>
        <end position="91"/>
    </location>
</feature>
<name>YFBV_ECO8A</name>
<protein>
    <recommendedName>
        <fullName evidence="1">UPF0208 membrane protein YfbV</fullName>
    </recommendedName>
</protein>
<accession>B7M5X4</accession>
<organism>
    <name type="scientific">Escherichia coli O8 (strain IAI1)</name>
    <dbReference type="NCBI Taxonomy" id="585034"/>
    <lineage>
        <taxon>Bacteria</taxon>
        <taxon>Pseudomonadati</taxon>
        <taxon>Pseudomonadota</taxon>
        <taxon>Gammaproteobacteria</taxon>
        <taxon>Enterobacterales</taxon>
        <taxon>Enterobacteriaceae</taxon>
        <taxon>Escherichia</taxon>
    </lineage>
</organism>